<name>GCSP_SALG2</name>
<sequence length="957" mass="104199">MTQTLSQLENRGAFIERHIGPDAAQQQEMLNAVGAESLNALTGQIVPKDIQLATPPQVGEAATEYAALAELKAIAGRNKRFTSYIGMGYTAVQLPPVILRNMLENPGWYTAYTPYQPEVSQGRLEALLNFQQVTLDLTGLDMASASLLDEATAAAEAMAMAKRVSKLKNANRFFVASDVHPQTLDVVRTRAETFGFDVIVDDAAKALDHQDVFGVLLQQVGSTGEIHDYSALISELKARKVIVSVAADFMALVLLTAPGKQGADIVFGSAQRFGVPMGYGGPHAAFFAAKDEFKRSMPGRIIGVSKDAAGNTALRMAMQTREQHIRREKANSNICTSQVLLANIASLYAVYHGPVGLKRIANRIHRLTDILAAGLQQKGLKLRHAHYFDTLCVEVADKAAVLARAEAAEINLRSDIHNAVGITLDETTTRENVAQLFNVLLGGSHGLNIETLDKDVALDSRSIQQSMLRDDAILTHPVFNRYHSETEMMRYMHSLERKDLALNQAMIPLGSCTMKLNAAAEMIPITWPEFAELHPFCPPEQAEGYHQMISQLSDWLVKLTGYDAVCMQPNSGAQGEYAGLLAIRHYHESRNEGHRDICLIPASAHGTNPASAHMAGMQVVVVACDKNGNIDLDDLRAKAEQHAANLSCIMVTYPSTHGVYEETIREVCEVVHQFGGQVYLDGANMNAQVGITSPGFIGADVSHLNLHKTFCIPHGGGGPGMGPIGVKAHLAPFVPGHSVVQIEGMLTRQGAVSAAPFGSASILPISWMYIRMMGAEGLKQASQVAILNANYIASRLKDAYPVLYTGRDGRVAHECILDIRPLKEETGISELDIAKRLIDYGFHAPTMSFPVAGTLMVEPTESEGKAELDRFIDAMLAIRAEIDQVKAGVWPLEDNPLVNAPHIQSELVAEWAHPYSREVAVFPAGVADKYWPTVKRLDDVYGDRNLFCSCVPISDYQ</sequence>
<comment type="function">
    <text evidence="1">The glycine cleavage system catalyzes the degradation of glycine. The P protein binds the alpha-amino group of glycine through its pyridoxal phosphate cofactor; CO(2) is released and the remaining methylamine moiety is then transferred to the lipoamide cofactor of the H protein.</text>
</comment>
<comment type="catalytic activity">
    <reaction evidence="1">
        <text>N(6)-[(R)-lipoyl]-L-lysyl-[glycine-cleavage complex H protein] + glycine + H(+) = N(6)-[(R)-S(8)-aminomethyldihydrolipoyl]-L-lysyl-[glycine-cleavage complex H protein] + CO2</text>
        <dbReference type="Rhea" id="RHEA:24304"/>
        <dbReference type="Rhea" id="RHEA-COMP:10494"/>
        <dbReference type="Rhea" id="RHEA-COMP:10495"/>
        <dbReference type="ChEBI" id="CHEBI:15378"/>
        <dbReference type="ChEBI" id="CHEBI:16526"/>
        <dbReference type="ChEBI" id="CHEBI:57305"/>
        <dbReference type="ChEBI" id="CHEBI:83099"/>
        <dbReference type="ChEBI" id="CHEBI:83143"/>
        <dbReference type="EC" id="1.4.4.2"/>
    </reaction>
</comment>
<comment type="cofactor">
    <cofactor evidence="1">
        <name>pyridoxal 5'-phosphate</name>
        <dbReference type="ChEBI" id="CHEBI:597326"/>
    </cofactor>
</comment>
<comment type="subunit">
    <text evidence="1">The glycine cleavage system is composed of four proteins: P, T, L and H.</text>
</comment>
<comment type="similarity">
    <text evidence="1">Belongs to the GcvP family.</text>
</comment>
<evidence type="ECO:0000255" key="1">
    <source>
        <dbReference type="HAMAP-Rule" id="MF_00711"/>
    </source>
</evidence>
<protein>
    <recommendedName>
        <fullName evidence="1">Glycine dehydrogenase (decarboxylating)</fullName>
        <ecNumber evidence="1">1.4.4.2</ecNumber>
    </recommendedName>
    <alternativeName>
        <fullName evidence="1">Glycine cleavage system P-protein</fullName>
    </alternativeName>
    <alternativeName>
        <fullName evidence="1">Glycine decarboxylase</fullName>
    </alternativeName>
    <alternativeName>
        <fullName evidence="1">Glycine dehydrogenase (aminomethyl-transferring)</fullName>
    </alternativeName>
</protein>
<accession>B5RE14</accession>
<keyword id="KW-0560">Oxidoreductase</keyword>
<keyword id="KW-0663">Pyridoxal phosphate</keyword>
<gene>
    <name evidence="1" type="primary">gcvP</name>
    <name type="ordered locus">SG2948</name>
</gene>
<organism>
    <name type="scientific">Salmonella gallinarum (strain 287/91 / NCTC 13346)</name>
    <dbReference type="NCBI Taxonomy" id="550538"/>
    <lineage>
        <taxon>Bacteria</taxon>
        <taxon>Pseudomonadati</taxon>
        <taxon>Pseudomonadota</taxon>
        <taxon>Gammaproteobacteria</taxon>
        <taxon>Enterobacterales</taxon>
        <taxon>Enterobacteriaceae</taxon>
        <taxon>Salmonella</taxon>
    </lineage>
</organism>
<dbReference type="EC" id="1.4.4.2" evidence="1"/>
<dbReference type="EMBL" id="AM933173">
    <property type="protein sequence ID" value="CAR38753.1"/>
    <property type="molecule type" value="Genomic_DNA"/>
</dbReference>
<dbReference type="RefSeq" id="WP_000194966.1">
    <property type="nucleotide sequence ID" value="NC_011274.1"/>
</dbReference>
<dbReference type="SMR" id="B5RE14"/>
<dbReference type="KEGG" id="seg:SG2948"/>
<dbReference type="HOGENOM" id="CLU_004620_3_2_6"/>
<dbReference type="Proteomes" id="UP000008321">
    <property type="component" value="Chromosome"/>
</dbReference>
<dbReference type="GO" id="GO:0005829">
    <property type="term" value="C:cytosol"/>
    <property type="evidence" value="ECO:0007669"/>
    <property type="project" value="TreeGrafter"/>
</dbReference>
<dbReference type="GO" id="GO:0005960">
    <property type="term" value="C:glycine cleavage complex"/>
    <property type="evidence" value="ECO:0007669"/>
    <property type="project" value="TreeGrafter"/>
</dbReference>
<dbReference type="GO" id="GO:0016594">
    <property type="term" value="F:glycine binding"/>
    <property type="evidence" value="ECO:0007669"/>
    <property type="project" value="TreeGrafter"/>
</dbReference>
<dbReference type="GO" id="GO:0004375">
    <property type="term" value="F:glycine dehydrogenase (decarboxylating) activity"/>
    <property type="evidence" value="ECO:0007669"/>
    <property type="project" value="UniProtKB-EC"/>
</dbReference>
<dbReference type="GO" id="GO:0030170">
    <property type="term" value="F:pyridoxal phosphate binding"/>
    <property type="evidence" value="ECO:0007669"/>
    <property type="project" value="TreeGrafter"/>
</dbReference>
<dbReference type="GO" id="GO:0019464">
    <property type="term" value="P:glycine decarboxylation via glycine cleavage system"/>
    <property type="evidence" value="ECO:0007669"/>
    <property type="project" value="UniProtKB-UniRule"/>
</dbReference>
<dbReference type="CDD" id="cd00613">
    <property type="entry name" value="GDC-P"/>
    <property type="match status" value="2"/>
</dbReference>
<dbReference type="FunFam" id="3.40.640.10:FF:000005">
    <property type="entry name" value="Glycine dehydrogenase (decarboxylating), mitochondrial"/>
    <property type="match status" value="1"/>
</dbReference>
<dbReference type="FunFam" id="3.90.1150.10:FF:000007">
    <property type="entry name" value="Glycine dehydrogenase (decarboxylating), mitochondrial"/>
    <property type="match status" value="1"/>
</dbReference>
<dbReference type="FunFam" id="3.40.640.10:FF:000007">
    <property type="entry name" value="glycine dehydrogenase (Decarboxylating), mitochondrial"/>
    <property type="match status" value="1"/>
</dbReference>
<dbReference type="Gene3D" id="3.90.1150.10">
    <property type="entry name" value="Aspartate Aminotransferase, domain 1"/>
    <property type="match status" value="1"/>
</dbReference>
<dbReference type="Gene3D" id="3.40.640.10">
    <property type="entry name" value="Type I PLP-dependent aspartate aminotransferase-like (Major domain)"/>
    <property type="match status" value="2"/>
</dbReference>
<dbReference type="HAMAP" id="MF_00711">
    <property type="entry name" value="GcvP"/>
    <property type="match status" value="1"/>
</dbReference>
<dbReference type="InterPro" id="IPR003437">
    <property type="entry name" value="GcvP"/>
</dbReference>
<dbReference type="InterPro" id="IPR049316">
    <property type="entry name" value="GDC-P_C"/>
</dbReference>
<dbReference type="InterPro" id="IPR049315">
    <property type="entry name" value="GDC-P_N"/>
</dbReference>
<dbReference type="InterPro" id="IPR020581">
    <property type="entry name" value="GDC_P"/>
</dbReference>
<dbReference type="InterPro" id="IPR015424">
    <property type="entry name" value="PyrdxlP-dep_Trfase"/>
</dbReference>
<dbReference type="InterPro" id="IPR015421">
    <property type="entry name" value="PyrdxlP-dep_Trfase_major"/>
</dbReference>
<dbReference type="InterPro" id="IPR015422">
    <property type="entry name" value="PyrdxlP-dep_Trfase_small"/>
</dbReference>
<dbReference type="NCBIfam" id="TIGR00461">
    <property type="entry name" value="gcvP"/>
    <property type="match status" value="1"/>
</dbReference>
<dbReference type="NCBIfam" id="NF003346">
    <property type="entry name" value="PRK04366.1"/>
    <property type="match status" value="1"/>
</dbReference>
<dbReference type="PANTHER" id="PTHR11773:SF13">
    <property type="entry name" value="GLYCINE DEHYDROGENASE (DECARBOXYLATING)"/>
    <property type="match status" value="1"/>
</dbReference>
<dbReference type="PANTHER" id="PTHR11773">
    <property type="entry name" value="GLYCINE DEHYDROGENASE, DECARBOXYLATING"/>
    <property type="match status" value="1"/>
</dbReference>
<dbReference type="Pfam" id="PF21478">
    <property type="entry name" value="GcvP2_C"/>
    <property type="match status" value="1"/>
</dbReference>
<dbReference type="Pfam" id="PF02347">
    <property type="entry name" value="GDC-P"/>
    <property type="match status" value="2"/>
</dbReference>
<dbReference type="SUPFAM" id="SSF53383">
    <property type="entry name" value="PLP-dependent transferases"/>
    <property type="match status" value="2"/>
</dbReference>
<reference key="1">
    <citation type="journal article" date="2008" name="Genome Res.">
        <title>Comparative genome analysis of Salmonella enteritidis PT4 and Salmonella gallinarum 287/91 provides insights into evolutionary and host adaptation pathways.</title>
        <authorList>
            <person name="Thomson N.R."/>
            <person name="Clayton D.J."/>
            <person name="Windhorst D."/>
            <person name="Vernikos G."/>
            <person name="Davidson S."/>
            <person name="Churcher C."/>
            <person name="Quail M.A."/>
            <person name="Stevens M."/>
            <person name="Jones M.A."/>
            <person name="Watson M."/>
            <person name="Barron A."/>
            <person name="Layton A."/>
            <person name="Pickard D."/>
            <person name="Kingsley R.A."/>
            <person name="Bignell A."/>
            <person name="Clark L."/>
            <person name="Harris B."/>
            <person name="Ormond D."/>
            <person name="Abdellah Z."/>
            <person name="Brooks K."/>
            <person name="Cherevach I."/>
            <person name="Chillingworth T."/>
            <person name="Woodward J."/>
            <person name="Norberczak H."/>
            <person name="Lord A."/>
            <person name="Arrowsmith C."/>
            <person name="Jagels K."/>
            <person name="Moule S."/>
            <person name="Mungall K."/>
            <person name="Saunders M."/>
            <person name="Whitehead S."/>
            <person name="Chabalgoity J.A."/>
            <person name="Maskell D."/>
            <person name="Humphreys T."/>
            <person name="Roberts M."/>
            <person name="Barrow P.A."/>
            <person name="Dougan G."/>
            <person name="Parkhill J."/>
        </authorList>
    </citation>
    <scope>NUCLEOTIDE SEQUENCE [LARGE SCALE GENOMIC DNA]</scope>
    <source>
        <strain>287/91 / NCTC 13346</strain>
    </source>
</reference>
<feature type="chain" id="PRO_1000132453" description="Glycine dehydrogenase (decarboxylating)">
    <location>
        <begin position="1"/>
        <end position="957"/>
    </location>
</feature>
<feature type="modified residue" description="N6-(pyridoxal phosphate)lysine" evidence="1">
    <location>
        <position position="708"/>
    </location>
</feature>
<proteinExistence type="inferred from homology"/>